<comment type="function">
    <text evidence="1">Component of the eukaryotic translation initiation factor 3 (eIF-3) complex, which is involved in protein synthesis of a specialized repertoire of mRNAs and, together with other initiation factors, stimulates binding of mRNA and methionyl-tRNAi to the 40S ribosome. The eIF-3 complex specifically targets and initiates translation of a subset of mRNAs involved in cell proliferation.</text>
</comment>
<comment type="subunit">
    <text evidence="1">Component of the eukaryotic translation initiation factor 3 (eIF-3) complex.</text>
</comment>
<comment type="subcellular location">
    <subcellularLocation>
        <location evidence="1">Cytoplasm</location>
    </subcellularLocation>
</comment>
<comment type="similarity">
    <text evidence="1">Belongs to the eIF-3 subunit E family.</text>
</comment>
<dbReference type="EMBL" id="DS027690">
    <property type="protein sequence ID" value="EAW21430.1"/>
    <property type="molecule type" value="Genomic_DNA"/>
</dbReference>
<dbReference type="RefSeq" id="XP_001263327.1">
    <property type="nucleotide sequence ID" value="XM_001263326.1"/>
</dbReference>
<dbReference type="SMR" id="A1D6T6"/>
<dbReference type="STRING" id="331117.A1D6T6"/>
<dbReference type="EnsemblFungi" id="EAW21430">
    <property type="protein sequence ID" value="EAW21430"/>
    <property type="gene ID" value="NFIA_065940"/>
</dbReference>
<dbReference type="GeneID" id="4589942"/>
<dbReference type="KEGG" id="nfi:NFIA_065940"/>
<dbReference type="VEuPathDB" id="FungiDB:NFIA_065940"/>
<dbReference type="eggNOG" id="KOG2758">
    <property type="taxonomic scope" value="Eukaryota"/>
</dbReference>
<dbReference type="HOGENOM" id="CLU_031132_0_0_1"/>
<dbReference type="OMA" id="NCPWILR"/>
<dbReference type="OrthoDB" id="417252at2759"/>
<dbReference type="Proteomes" id="UP000006702">
    <property type="component" value="Unassembled WGS sequence"/>
</dbReference>
<dbReference type="GO" id="GO:0016282">
    <property type="term" value="C:eukaryotic 43S preinitiation complex"/>
    <property type="evidence" value="ECO:0007669"/>
    <property type="project" value="UniProtKB-UniRule"/>
</dbReference>
<dbReference type="GO" id="GO:0033290">
    <property type="term" value="C:eukaryotic 48S preinitiation complex"/>
    <property type="evidence" value="ECO:0007669"/>
    <property type="project" value="UniProtKB-UniRule"/>
</dbReference>
<dbReference type="GO" id="GO:0071540">
    <property type="term" value="C:eukaryotic translation initiation factor 3 complex, eIF3e"/>
    <property type="evidence" value="ECO:0007669"/>
    <property type="project" value="UniProtKB-UniRule"/>
</dbReference>
<dbReference type="GO" id="GO:0003743">
    <property type="term" value="F:translation initiation factor activity"/>
    <property type="evidence" value="ECO:0007669"/>
    <property type="project" value="UniProtKB-UniRule"/>
</dbReference>
<dbReference type="GO" id="GO:0001732">
    <property type="term" value="P:formation of cytoplasmic translation initiation complex"/>
    <property type="evidence" value="ECO:0007669"/>
    <property type="project" value="UniProtKB-UniRule"/>
</dbReference>
<dbReference type="CDD" id="cd21378">
    <property type="entry name" value="eIF3E"/>
    <property type="match status" value="1"/>
</dbReference>
<dbReference type="Gene3D" id="1.25.40.570">
    <property type="match status" value="1"/>
</dbReference>
<dbReference type="HAMAP" id="MF_03004">
    <property type="entry name" value="eIF3e"/>
    <property type="match status" value="1"/>
</dbReference>
<dbReference type="InterPro" id="IPR016650">
    <property type="entry name" value="eIF3e"/>
</dbReference>
<dbReference type="InterPro" id="IPR019010">
    <property type="entry name" value="eIF3e_N"/>
</dbReference>
<dbReference type="InterPro" id="IPR000717">
    <property type="entry name" value="PCI_dom"/>
</dbReference>
<dbReference type="InterPro" id="IPR036390">
    <property type="entry name" value="WH_DNA-bd_sf"/>
</dbReference>
<dbReference type="PANTHER" id="PTHR10317">
    <property type="entry name" value="EUKARYOTIC TRANSLATION INITIATION FACTOR 3 SUBUNIT E"/>
    <property type="match status" value="1"/>
</dbReference>
<dbReference type="Pfam" id="PF09440">
    <property type="entry name" value="eIF3_N"/>
    <property type="match status" value="1"/>
</dbReference>
<dbReference type="Pfam" id="PF21357">
    <property type="entry name" value="EIF3E_C"/>
    <property type="match status" value="1"/>
</dbReference>
<dbReference type="Pfam" id="PF01399">
    <property type="entry name" value="PCI"/>
    <property type="match status" value="1"/>
</dbReference>
<dbReference type="PIRSF" id="PIRSF016255">
    <property type="entry name" value="eIF3e_su6"/>
    <property type="match status" value="1"/>
</dbReference>
<dbReference type="SMART" id="SM01186">
    <property type="entry name" value="eIF3_N"/>
    <property type="match status" value="1"/>
</dbReference>
<dbReference type="SMART" id="SM00088">
    <property type="entry name" value="PINT"/>
    <property type="match status" value="1"/>
</dbReference>
<dbReference type="SUPFAM" id="SSF46785">
    <property type="entry name" value="Winged helix' DNA-binding domain"/>
    <property type="match status" value="1"/>
</dbReference>
<dbReference type="PROSITE" id="PS50250">
    <property type="entry name" value="PCI"/>
    <property type="match status" value="1"/>
</dbReference>
<proteinExistence type="inferred from homology"/>
<gene>
    <name type="primary">int6</name>
    <name type="ORF">NFIA_065940</name>
</gene>
<feature type="chain" id="PRO_0000365989" description="Eukaryotic translation initiation factor 3 subunit E">
    <location>
        <begin position="1"/>
        <end position="455"/>
    </location>
</feature>
<feature type="domain" description="PCI" evidence="2">
    <location>
        <begin position="256"/>
        <end position="425"/>
    </location>
</feature>
<protein>
    <recommendedName>
        <fullName evidence="1">Eukaryotic translation initiation factor 3 subunit E</fullName>
        <shortName evidence="1">eIF3e</shortName>
    </recommendedName>
</protein>
<organism>
    <name type="scientific">Neosartorya fischeri (strain ATCC 1020 / DSM 3700 / CBS 544.65 / FGSC A1164 / JCM 1740 / NRRL 181 / WB 181)</name>
    <name type="common">Aspergillus fischerianus</name>
    <dbReference type="NCBI Taxonomy" id="331117"/>
    <lineage>
        <taxon>Eukaryota</taxon>
        <taxon>Fungi</taxon>
        <taxon>Dikarya</taxon>
        <taxon>Ascomycota</taxon>
        <taxon>Pezizomycotina</taxon>
        <taxon>Eurotiomycetes</taxon>
        <taxon>Eurotiomycetidae</taxon>
        <taxon>Eurotiales</taxon>
        <taxon>Aspergillaceae</taxon>
        <taxon>Aspergillus</taxon>
        <taxon>Aspergillus subgen. Fumigati</taxon>
    </lineage>
</organism>
<name>EIF3E_NEOFI</name>
<evidence type="ECO:0000255" key="1">
    <source>
        <dbReference type="HAMAP-Rule" id="MF_03004"/>
    </source>
</evidence>
<evidence type="ECO:0000255" key="2">
    <source>
        <dbReference type="PROSITE-ProRule" id="PRU01185"/>
    </source>
</evidence>
<accession>A1D6T6</accession>
<sequence>MAANVPPSAETLLSGAAAHPPKTAEEIANQYNLLPKLIPYLDRHLVFPLLEFSSGQDDEKEVVRAKYELLKHTNMTDYVANLWKEINNSDDIPDEFVKKREEVLAKLQQYEEESAKITQLLQDESVVANLRSDKVANLKFLEEQHGVTIEMVNSLYDYGRFQYSCGSYGNAAELLYQFRVLSTDNDKVASATWGKFASEILTTSWEAAMEEVQKVKDSIETRLFNNPLGQLQNRSWLIHWSLFPFFNHDPARDVLTDLFFSPAYINTIQTNCPWILRYLAAAVITNRNRAHKSSSVYQKQLKDLIRVVRQEGYEYNDPITDFVKALYVDFDFEEAQKKLGEAEDVLRSDFFLVSTTDAFVEAARHLISESYCKIHQRIDIKDLSTRLGLNQDEGEKWIVNLIRDTRVDAKIDYKEGTVIMNHPPQSVYQQVIEKTKGAFFRTQVLRFVRLLYPHD</sequence>
<reference key="1">
    <citation type="journal article" date="2008" name="PLoS Genet.">
        <title>Genomic islands in the pathogenic filamentous fungus Aspergillus fumigatus.</title>
        <authorList>
            <person name="Fedorova N.D."/>
            <person name="Khaldi N."/>
            <person name="Joardar V.S."/>
            <person name="Maiti R."/>
            <person name="Amedeo P."/>
            <person name="Anderson M.J."/>
            <person name="Crabtree J."/>
            <person name="Silva J.C."/>
            <person name="Badger J.H."/>
            <person name="Albarraq A."/>
            <person name="Angiuoli S."/>
            <person name="Bussey H."/>
            <person name="Bowyer P."/>
            <person name="Cotty P.J."/>
            <person name="Dyer P.S."/>
            <person name="Egan A."/>
            <person name="Galens K."/>
            <person name="Fraser-Liggett C.M."/>
            <person name="Haas B.J."/>
            <person name="Inman J.M."/>
            <person name="Kent R."/>
            <person name="Lemieux S."/>
            <person name="Malavazi I."/>
            <person name="Orvis J."/>
            <person name="Roemer T."/>
            <person name="Ronning C.M."/>
            <person name="Sundaram J.P."/>
            <person name="Sutton G."/>
            <person name="Turner G."/>
            <person name="Venter J.C."/>
            <person name="White O.R."/>
            <person name="Whitty B.R."/>
            <person name="Youngman P."/>
            <person name="Wolfe K.H."/>
            <person name="Goldman G.H."/>
            <person name="Wortman J.R."/>
            <person name="Jiang B."/>
            <person name="Denning D.W."/>
            <person name="Nierman W.C."/>
        </authorList>
    </citation>
    <scope>NUCLEOTIDE SEQUENCE [LARGE SCALE GENOMIC DNA]</scope>
    <source>
        <strain>ATCC 1020 / DSM 3700 / CBS 544.65 / FGSC A1164 / JCM 1740 / NRRL 181 / WB 181</strain>
    </source>
</reference>
<keyword id="KW-0963">Cytoplasm</keyword>
<keyword id="KW-0396">Initiation factor</keyword>
<keyword id="KW-0648">Protein biosynthesis</keyword>
<keyword id="KW-1185">Reference proteome</keyword>